<proteinExistence type="inferred from homology"/>
<keyword id="KW-0067">ATP-binding</keyword>
<keyword id="KW-0963">Cytoplasm</keyword>
<keyword id="KW-0436">Ligase</keyword>
<keyword id="KW-0547">Nucleotide-binding</keyword>
<keyword id="KW-1185">Reference proteome</keyword>
<keyword id="KW-0819">tRNA processing</keyword>
<comment type="function">
    <text evidence="1">Ligates lysine onto the cytidine present at position 34 of the AUA codon-specific tRNA(Ile) that contains the anticodon CAU, in an ATP-dependent manner. Cytidine is converted to lysidine, thus changing the amino acid specificity of the tRNA from methionine to isoleucine.</text>
</comment>
<comment type="catalytic activity">
    <reaction evidence="1">
        <text>cytidine(34) in tRNA(Ile2) + L-lysine + ATP = lysidine(34) in tRNA(Ile2) + AMP + diphosphate + H(+)</text>
        <dbReference type="Rhea" id="RHEA:43744"/>
        <dbReference type="Rhea" id="RHEA-COMP:10625"/>
        <dbReference type="Rhea" id="RHEA-COMP:10670"/>
        <dbReference type="ChEBI" id="CHEBI:15378"/>
        <dbReference type="ChEBI" id="CHEBI:30616"/>
        <dbReference type="ChEBI" id="CHEBI:32551"/>
        <dbReference type="ChEBI" id="CHEBI:33019"/>
        <dbReference type="ChEBI" id="CHEBI:82748"/>
        <dbReference type="ChEBI" id="CHEBI:83665"/>
        <dbReference type="ChEBI" id="CHEBI:456215"/>
        <dbReference type="EC" id="6.3.4.19"/>
    </reaction>
</comment>
<comment type="subcellular location">
    <subcellularLocation>
        <location evidence="1">Cytoplasm</location>
    </subcellularLocation>
</comment>
<comment type="domain">
    <text>The N-terminal region contains the highly conserved SGGXDS motif, predicted to be a P-loop motif involved in ATP binding.</text>
</comment>
<comment type="similarity">
    <text evidence="1">Belongs to the tRNA(Ile)-lysidine synthase family.</text>
</comment>
<accession>A1VRB1</accession>
<sequence length="328" mass="34690">MAAPVASLNPALAGIDSLFSAFPSSSSLPLGVAYSGGADSTALLLAAAERWPGQVQAFHIHHGLQAAADDFVRVCESVCAKAGLPLHIVQVDARHASGESPEDAARRARYAALATAATARGMQGVLLGQHADDQVETMLLALSRGAGLPGLSAMPASFGRGGMVFYRPLLHIPSAVLREWLVEQPIEFVDDPTNTDERYTRNRIRARLLPALAQAFPQFHATFARSARHAAQAQAVLVEVAAQDLAVVGNPPAIKALQALSPPRQANVLRHWLLLQYATPSAAQLEQLLHQVAACTTRGHRIHLKVASGHVTRLGGSLCYSDAAARAC</sequence>
<evidence type="ECO:0000255" key="1">
    <source>
        <dbReference type="HAMAP-Rule" id="MF_01161"/>
    </source>
</evidence>
<feature type="chain" id="PRO_1000164322" description="tRNA(Ile)-lysidine synthase">
    <location>
        <begin position="1"/>
        <end position="328"/>
    </location>
</feature>
<feature type="binding site" evidence="1">
    <location>
        <begin position="35"/>
        <end position="40"/>
    </location>
    <ligand>
        <name>ATP</name>
        <dbReference type="ChEBI" id="CHEBI:30616"/>
    </ligand>
</feature>
<dbReference type="EC" id="6.3.4.19" evidence="1"/>
<dbReference type="EMBL" id="CP000529">
    <property type="protein sequence ID" value="ABM38189.1"/>
    <property type="molecule type" value="Genomic_DNA"/>
</dbReference>
<dbReference type="RefSeq" id="WP_011802265.1">
    <property type="nucleotide sequence ID" value="NC_008781.1"/>
</dbReference>
<dbReference type="SMR" id="A1VRB1"/>
<dbReference type="STRING" id="365044.Pnap_2890"/>
<dbReference type="KEGG" id="pna:Pnap_2890"/>
<dbReference type="eggNOG" id="COG0037">
    <property type="taxonomic scope" value="Bacteria"/>
</dbReference>
<dbReference type="HOGENOM" id="CLU_018869_2_1_4"/>
<dbReference type="OrthoDB" id="9807403at2"/>
<dbReference type="Proteomes" id="UP000000644">
    <property type="component" value="Chromosome"/>
</dbReference>
<dbReference type="GO" id="GO:0005737">
    <property type="term" value="C:cytoplasm"/>
    <property type="evidence" value="ECO:0007669"/>
    <property type="project" value="UniProtKB-SubCell"/>
</dbReference>
<dbReference type="GO" id="GO:0005524">
    <property type="term" value="F:ATP binding"/>
    <property type="evidence" value="ECO:0007669"/>
    <property type="project" value="UniProtKB-UniRule"/>
</dbReference>
<dbReference type="GO" id="GO:0032267">
    <property type="term" value="F:tRNA(Ile)-lysidine synthase activity"/>
    <property type="evidence" value="ECO:0007669"/>
    <property type="project" value="UniProtKB-EC"/>
</dbReference>
<dbReference type="GO" id="GO:0006400">
    <property type="term" value="P:tRNA modification"/>
    <property type="evidence" value="ECO:0007669"/>
    <property type="project" value="UniProtKB-UniRule"/>
</dbReference>
<dbReference type="CDD" id="cd01992">
    <property type="entry name" value="TilS_N"/>
    <property type="match status" value="1"/>
</dbReference>
<dbReference type="Gene3D" id="1.20.59.20">
    <property type="match status" value="1"/>
</dbReference>
<dbReference type="Gene3D" id="3.40.50.620">
    <property type="entry name" value="HUPs"/>
    <property type="match status" value="1"/>
</dbReference>
<dbReference type="HAMAP" id="MF_01161">
    <property type="entry name" value="tRNA_Ile_lys_synt"/>
    <property type="match status" value="1"/>
</dbReference>
<dbReference type="InterPro" id="IPR014729">
    <property type="entry name" value="Rossmann-like_a/b/a_fold"/>
</dbReference>
<dbReference type="InterPro" id="IPR011063">
    <property type="entry name" value="TilS/TtcA_N"/>
</dbReference>
<dbReference type="InterPro" id="IPR012094">
    <property type="entry name" value="tRNA_Ile_lys_synt"/>
</dbReference>
<dbReference type="InterPro" id="IPR012795">
    <property type="entry name" value="tRNA_Ile_lys_synt_N"/>
</dbReference>
<dbReference type="InterPro" id="IPR015262">
    <property type="entry name" value="tRNA_Ile_lys_synt_subst-bd"/>
</dbReference>
<dbReference type="NCBIfam" id="TIGR02432">
    <property type="entry name" value="lysidine_TilS_N"/>
    <property type="match status" value="1"/>
</dbReference>
<dbReference type="PANTHER" id="PTHR43033">
    <property type="entry name" value="TRNA(ILE)-LYSIDINE SYNTHASE-RELATED"/>
    <property type="match status" value="1"/>
</dbReference>
<dbReference type="PANTHER" id="PTHR43033:SF1">
    <property type="entry name" value="TRNA(ILE)-LYSIDINE SYNTHASE-RELATED"/>
    <property type="match status" value="1"/>
</dbReference>
<dbReference type="Pfam" id="PF01171">
    <property type="entry name" value="ATP_bind_3"/>
    <property type="match status" value="1"/>
</dbReference>
<dbReference type="Pfam" id="PF09179">
    <property type="entry name" value="TilS"/>
    <property type="match status" value="1"/>
</dbReference>
<dbReference type="SUPFAM" id="SSF52402">
    <property type="entry name" value="Adenine nucleotide alpha hydrolases-like"/>
    <property type="match status" value="1"/>
</dbReference>
<dbReference type="SUPFAM" id="SSF82829">
    <property type="entry name" value="MesJ substrate recognition domain-like"/>
    <property type="match status" value="1"/>
</dbReference>
<name>TILS_POLNA</name>
<organism>
    <name type="scientific">Polaromonas naphthalenivorans (strain CJ2)</name>
    <dbReference type="NCBI Taxonomy" id="365044"/>
    <lineage>
        <taxon>Bacteria</taxon>
        <taxon>Pseudomonadati</taxon>
        <taxon>Pseudomonadota</taxon>
        <taxon>Betaproteobacteria</taxon>
        <taxon>Burkholderiales</taxon>
        <taxon>Comamonadaceae</taxon>
        <taxon>Polaromonas</taxon>
    </lineage>
</organism>
<protein>
    <recommendedName>
        <fullName evidence="1">tRNA(Ile)-lysidine synthase</fullName>
        <ecNumber evidence="1">6.3.4.19</ecNumber>
    </recommendedName>
    <alternativeName>
        <fullName evidence="1">tRNA(Ile)-2-lysyl-cytidine synthase</fullName>
    </alternativeName>
    <alternativeName>
        <fullName evidence="1">tRNA(Ile)-lysidine synthetase</fullName>
    </alternativeName>
</protein>
<reference key="1">
    <citation type="journal article" date="2009" name="Environ. Microbiol.">
        <title>The genome of Polaromonas naphthalenivorans strain CJ2, isolated from coal tar-contaminated sediment, reveals physiological and metabolic versatility and evolution through extensive horizontal gene transfer.</title>
        <authorList>
            <person name="Yagi J.M."/>
            <person name="Sims D."/>
            <person name="Brettin T."/>
            <person name="Bruce D."/>
            <person name="Madsen E.L."/>
        </authorList>
    </citation>
    <scope>NUCLEOTIDE SEQUENCE [LARGE SCALE GENOMIC DNA]</scope>
    <source>
        <strain>CJ2</strain>
    </source>
</reference>
<gene>
    <name evidence="1" type="primary">tilS</name>
    <name type="ordered locus">Pnap_2890</name>
</gene>